<organism>
    <name type="scientific">Bacteroides fragilis (strain YCH46)</name>
    <dbReference type="NCBI Taxonomy" id="295405"/>
    <lineage>
        <taxon>Bacteria</taxon>
        <taxon>Pseudomonadati</taxon>
        <taxon>Bacteroidota</taxon>
        <taxon>Bacteroidia</taxon>
        <taxon>Bacteroidales</taxon>
        <taxon>Bacteroidaceae</taxon>
        <taxon>Bacteroides</taxon>
    </lineage>
</organism>
<name>MURA_BACFR</name>
<gene>
    <name evidence="1" type="primary">murA</name>
    <name type="ordered locus">BF3702</name>
</gene>
<comment type="function">
    <text evidence="1">Cell wall formation. Adds enolpyruvyl to UDP-N-acetylglucosamine.</text>
</comment>
<comment type="catalytic activity">
    <reaction evidence="1">
        <text>phosphoenolpyruvate + UDP-N-acetyl-alpha-D-glucosamine = UDP-N-acetyl-3-O-(1-carboxyvinyl)-alpha-D-glucosamine + phosphate</text>
        <dbReference type="Rhea" id="RHEA:18681"/>
        <dbReference type="ChEBI" id="CHEBI:43474"/>
        <dbReference type="ChEBI" id="CHEBI:57705"/>
        <dbReference type="ChEBI" id="CHEBI:58702"/>
        <dbReference type="ChEBI" id="CHEBI:68483"/>
        <dbReference type="EC" id="2.5.1.7"/>
    </reaction>
</comment>
<comment type="pathway">
    <text evidence="1">Cell wall biogenesis; peptidoglycan biosynthesis.</text>
</comment>
<comment type="subcellular location">
    <subcellularLocation>
        <location evidence="1">Cytoplasm</location>
    </subcellularLocation>
</comment>
<comment type="similarity">
    <text evidence="1">Belongs to the EPSP synthase family. MurA subfamily.</text>
</comment>
<accession>Q64PY6</accession>
<evidence type="ECO:0000255" key="1">
    <source>
        <dbReference type="HAMAP-Rule" id="MF_00111"/>
    </source>
</evidence>
<proteinExistence type="inferred from homology"/>
<keyword id="KW-0131">Cell cycle</keyword>
<keyword id="KW-0132">Cell division</keyword>
<keyword id="KW-0133">Cell shape</keyword>
<keyword id="KW-0961">Cell wall biogenesis/degradation</keyword>
<keyword id="KW-0963">Cytoplasm</keyword>
<keyword id="KW-0573">Peptidoglycan synthesis</keyword>
<keyword id="KW-0808">Transferase</keyword>
<dbReference type="EC" id="2.5.1.7" evidence="1"/>
<dbReference type="EMBL" id="AP006841">
    <property type="protein sequence ID" value="BAD50445.1"/>
    <property type="molecule type" value="Genomic_DNA"/>
</dbReference>
<dbReference type="RefSeq" id="WP_005790583.1">
    <property type="nucleotide sequence ID" value="NZ_UYXF01000029.1"/>
</dbReference>
<dbReference type="RefSeq" id="YP_100979.1">
    <property type="nucleotide sequence ID" value="NC_006347.1"/>
</dbReference>
<dbReference type="SMR" id="Q64PY6"/>
<dbReference type="STRING" id="295405.BF3702"/>
<dbReference type="GeneID" id="60367263"/>
<dbReference type="KEGG" id="bfr:BF3702"/>
<dbReference type="PATRIC" id="fig|295405.11.peg.3553"/>
<dbReference type="HOGENOM" id="CLU_027387_0_1_10"/>
<dbReference type="OrthoDB" id="9803760at2"/>
<dbReference type="UniPathway" id="UPA00219"/>
<dbReference type="Proteomes" id="UP000002197">
    <property type="component" value="Chromosome"/>
</dbReference>
<dbReference type="GO" id="GO:0005737">
    <property type="term" value="C:cytoplasm"/>
    <property type="evidence" value="ECO:0007669"/>
    <property type="project" value="UniProtKB-SubCell"/>
</dbReference>
<dbReference type="GO" id="GO:0008760">
    <property type="term" value="F:UDP-N-acetylglucosamine 1-carboxyvinyltransferase activity"/>
    <property type="evidence" value="ECO:0007669"/>
    <property type="project" value="UniProtKB-UniRule"/>
</dbReference>
<dbReference type="GO" id="GO:0051301">
    <property type="term" value="P:cell division"/>
    <property type="evidence" value="ECO:0007669"/>
    <property type="project" value="UniProtKB-KW"/>
</dbReference>
<dbReference type="GO" id="GO:0071555">
    <property type="term" value="P:cell wall organization"/>
    <property type="evidence" value="ECO:0007669"/>
    <property type="project" value="UniProtKB-KW"/>
</dbReference>
<dbReference type="GO" id="GO:0009252">
    <property type="term" value="P:peptidoglycan biosynthetic process"/>
    <property type="evidence" value="ECO:0007669"/>
    <property type="project" value="UniProtKB-UniRule"/>
</dbReference>
<dbReference type="GO" id="GO:0008360">
    <property type="term" value="P:regulation of cell shape"/>
    <property type="evidence" value="ECO:0007669"/>
    <property type="project" value="UniProtKB-KW"/>
</dbReference>
<dbReference type="GO" id="GO:0019277">
    <property type="term" value="P:UDP-N-acetylgalactosamine biosynthetic process"/>
    <property type="evidence" value="ECO:0007669"/>
    <property type="project" value="InterPro"/>
</dbReference>
<dbReference type="CDD" id="cd01555">
    <property type="entry name" value="UdpNAET"/>
    <property type="match status" value="1"/>
</dbReference>
<dbReference type="Gene3D" id="3.65.10.10">
    <property type="entry name" value="Enolpyruvate transferase domain"/>
    <property type="match status" value="2"/>
</dbReference>
<dbReference type="HAMAP" id="MF_00111">
    <property type="entry name" value="MurA"/>
    <property type="match status" value="1"/>
</dbReference>
<dbReference type="InterPro" id="IPR001986">
    <property type="entry name" value="Enolpyruvate_Tfrase_dom"/>
</dbReference>
<dbReference type="InterPro" id="IPR036968">
    <property type="entry name" value="Enolpyruvate_Tfrase_sf"/>
</dbReference>
<dbReference type="InterPro" id="IPR050068">
    <property type="entry name" value="MurA_subfamily"/>
</dbReference>
<dbReference type="InterPro" id="IPR013792">
    <property type="entry name" value="RNA3'P_cycl/enolpyr_Trfase_a/b"/>
</dbReference>
<dbReference type="InterPro" id="IPR005750">
    <property type="entry name" value="UDP_GlcNAc_COvinyl_MurA"/>
</dbReference>
<dbReference type="NCBIfam" id="TIGR01072">
    <property type="entry name" value="murA"/>
    <property type="match status" value="1"/>
</dbReference>
<dbReference type="NCBIfam" id="NF006873">
    <property type="entry name" value="PRK09369.1"/>
    <property type="match status" value="1"/>
</dbReference>
<dbReference type="PANTHER" id="PTHR43783">
    <property type="entry name" value="UDP-N-ACETYLGLUCOSAMINE 1-CARBOXYVINYLTRANSFERASE"/>
    <property type="match status" value="1"/>
</dbReference>
<dbReference type="PANTHER" id="PTHR43783:SF1">
    <property type="entry name" value="UDP-N-ACETYLGLUCOSAMINE 1-CARBOXYVINYLTRANSFERASE"/>
    <property type="match status" value="1"/>
</dbReference>
<dbReference type="Pfam" id="PF00275">
    <property type="entry name" value="EPSP_synthase"/>
    <property type="match status" value="1"/>
</dbReference>
<dbReference type="SUPFAM" id="SSF55205">
    <property type="entry name" value="EPT/RTPC-like"/>
    <property type="match status" value="1"/>
</dbReference>
<sequence>MASFVIEGGHRLSGEIHPQGAKNEVLQIICATLLTAEEVTVNNIPDILDVNNLIQLMRDMGVTVAKTGVDSYSFKAANVDLAYLESDNFLKKCSSLRGSVMLIGPMVARFGKAMISKPGGDKIGRRRLDTHFIGIQNLGADFTYNEEREIYEISAEELKGTSMLLDEASVTGTANIVMAAVLAKGKTTIYNAACEPYLQQLCKMLNRMGAKISGIASNLLTIEGVEELHGTDHTVLPDMIEVGSFIGMAAMTRSEITIKNVSYENLGIIPESFRRLGIKLEQRGDDIFVPAQDCYQIESFIDGSIMTIADAPWPGLTPDLLSVMLVVATQAKGSVLIHQKMFESRLFFVDKLIDMGAQIILCDPHRAVVIGHNHGFTLRGGNMTSPDIRAGIALLIAAMSAEGISRIHNIEQIDRGYQNIEGRLNAIGARITRI</sequence>
<reference key="1">
    <citation type="journal article" date="2004" name="Proc. Natl. Acad. Sci. U.S.A.">
        <title>Genomic analysis of Bacteroides fragilis reveals extensive DNA inversions regulating cell surface adaptation.</title>
        <authorList>
            <person name="Kuwahara T."/>
            <person name="Yamashita A."/>
            <person name="Hirakawa H."/>
            <person name="Nakayama H."/>
            <person name="Toh H."/>
            <person name="Okada N."/>
            <person name="Kuhara S."/>
            <person name="Hattori M."/>
            <person name="Hayashi T."/>
            <person name="Ohnishi Y."/>
        </authorList>
    </citation>
    <scope>NUCLEOTIDE SEQUENCE [LARGE SCALE GENOMIC DNA]</scope>
    <source>
        <strain>YCH46</strain>
    </source>
</reference>
<feature type="chain" id="PRO_0000231166" description="UDP-N-acetylglucosamine 1-carboxyvinyltransferase">
    <location>
        <begin position="1"/>
        <end position="434"/>
    </location>
</feature>
<feature type="active site" description="Proton donor" evidence="1">
    <location>
        <position position="121"/>
    </location>
</feature>
<feature type="binding site" evidence="1">
    <location>
        <begin position="22"/>
        <end position="23"/>
    </location>
    <ligand>
        <name>phosphoenolpyruvate</name>
        <dbReference type="ChEBI" id="CHEBI:58702"/>
    </ligand>
</feature>
<feature type="binding site" evidence="1">
    <location>
        <position position="97"/>
    </location>
    <ligand>
        <name>UDP-N-acetyl-alpha-D-glucosamine</name>
        <dbReference type="ChEBI" id="CHEBI:57705"/>
    </ligand>
</feature>
<feature type="binding site" evidence="1">
    <location>
        <position position="319"/>
    </location>
    <ligand>
        <name>UDP-N-acetyl-alpha-D-glucosamine</name>
        <dbReference type="ChEBI" id="CHEBI:57705"/>
    </ligand>
</feature>
<feature type="binding site" evidence="1">
    <location>
        <position position="341"/>
    </location>
    <ligand>
        <name>UDP-N-acetyl-alpha-D-glucosamine</name>
        <dbReference type="ChEBI" id="CHEBI:57705"/>
    </ligand>
</feature>
<protein>
    <recommendedName>
        <fullName evidence="1">UDP-N-acetylglucosamine 1-carboxyvinyltransferase</fullName>
        <ecNumber evidence="1">2.5.1.7</ecNumber>
    </recommendedName>
    <alternativeName>
        <fullName evidence="1">Enoylpyruvate transferase</fullName>
    </alternativeName>
    <alternativeName>
        <fullName evidence="1">UDP-N-acetylglucosamine enolpyruvyl transferase</fullName>
        <shortName evidence="1">EPT</shortName>
    </alternativeName>
</protein>